<feature type="chain" id="PRO_0000107908" description="Arylamine N-acetyltransferase 1">
    <location>
        <begin position="1"/>
        <end position="290"/>
    </location>
</feature>
<feature type="active site" description="Acyl-thioester intermediate" evidence="1">
    <location>
        <position position="68"/>
    </location>
</feature>
<feature type="active site" evidence="1">
    <location>
        <position position="107"/>
    </location>
</feature>
<feature type="active site" evidence="1">
    <location>
        <position position="122"/>
    </location>
</feature>
<feature type="binding site" evidence="1">
    <location>
        <position position="103"/>
    </location>
    <ligand>
        <name>CoA</name>
        <dbReference type="ChEBI" id="CHEBI:57287"/>
    </ligand>
</feature>
<feature type="binding site" evidence="1">
    <location>
        <begin position="106"/>
        <end position="107"/>
    </location>
    <ligand>
        <name>substrate</name>
    </ligand>
</feature>
<feature type="binding site" evidence="1">
    <location>
        <position position="208"/>
    </location>
    <ligand>
        <name>CoA</name>
        <dbReference type="ChEBI" id="CHEBI:57287"/>
    </ligand>
</feature>
<feature type="modified residue" description="N-acetylmethionine" evidence="2">
    <location>
        <position position="1"/>
    </location>
</feature>
<name>ARY1_MOUSE</name>
<evidence type="ECO:0000250" key="1"/>
<evidence type="ECO:0000250" key="2">
    <source>
        <dbReference type="UniProtKB" id="P18440"/>
    </source>
</evidence>
<evidence type="ECO:0000269" key="3">
    <source>
    </source>
</evidence>
<evidence type="ECO:0000305" key="4"/>
<gene>
    <name type="primary">Nat1</name>
    <name type="synonym">Aac1</name>
</gene>
<proteinExistence type="evidence at protein level"/>
<comment type="function">
    <text>Participates in the detoxification of a plethora of hydrazine and arylamine drugs. Isoniazid, 2-aminofluorene and anisidine are preferred substrates for NAT-1. No activity with p-aminobenzoic acid (PABA) nor SMZ.</text>
</comment>
<comment type="catalytic activity">
    <reaction evidence="3">
        <text>an arylamine + acetyl-CoA = an N-acetylarylamine + CoA</text>
        <dbReference type="Rhea" id="RHEA:16613"/>
        <dbReference type="ChEBI" id="CHEBI:13790"/>
        <dbReference type="ChEBI" id="CHEBI:50471"/>
        <dbReference type="ChEBI" id="CHEBI:57287"/>
        <dbReference type="ChEBI" id="CHEBI:57288"/>
        <dbReference type="EC" id="2.3.1.5"/>
    </reaction>
</comment>
<comment type="subcellular location">
    <subcellularLocation>
        <location>Cytoplasm</location>
    </subcellularLocation>
</comment>
<comment type="similarity">
    <text evidence="4">Belongs to the arylamine N-acetyltransferase family.</text>
</comment>
<protein>
    <recommendedName>
        <fullName>Arylamine N-acetyltransferase 1</fullName>
        <ecNumber evidence="3">2.3.1.5</ecNumber>
    </recommendedName>
    <alternativeName>
        <fullName>Arylamide acetylase 1</fullName>
    </alternativeName>
    <alternativeName>
        <fullName>N-acetyltransferase type 1</fullName>
        <shortName>NAT-1</shortName>
    </alternativeName>
</protein>
<accession>P50294</accession>
<reference key="1">
    <citation type="journal article" date="1991" name="Mol. Pharmacol.">
        <title>Molecular genetic basis of rapid and slow acetylation in mice.</title>
        <authorList>
            <person name="Martell K.J."/>
            <person name="Vatsis K.P."/>
            <person name="Weber W.W."/>
        </authorList>
    </citation>
    <scope>NUCLEOTIDE SEQUENCE</scope>
    <source>
        <strain>C57BL/6J</strain>
    </source>
</reference>
<reference key="2">
    <citation type="submission" date="1995-09" db="EMBL/GenBank/DDBJ databases">
        <authorList>
            <person name="Hein D.W."/>
            <person name="Doll M.A."/>
        </authorList>
    </citation>
    <scope>NUCLEOTIDE SEQUENCE</scope>
    <source>
        <strain>C3H/HeJ</strain>
        <tissue>Heart</tissue>
    </source>
</reference>
<reference key="3">
    <citation type="journal article" date="1994" name="Biochem. J.">
        <title>Arylamine N-acetyltransferase in Balb/c mice: identification of a novel mouse isoenzyme by cloning and expression in vitro.</title>
        <authorList>
            <person name="Kelly S.L."/>
            <person name="Sim E."/>
        </authorList>
    </citation>
    <scope>NUCLEOTIDE SEQUENCE</scope>
    <scope>CATALYTIC ACTIVITY</scope>
    <source>
        <strain>BALB/cJ</strain>
        <tissue>Liver</tissue>
    </source>
</reference>
<reference key="4">
    <citation type="journal article" date="1992" name="Mol. Pharmacol.">
        <title>Cloned mouse N-acetyltransferases: enzymatic properties of expressed Nat-1 and Nat-2 gene products.</title>
        <authorList>
            <person name="Martell K.J."/>
            <person name="Levy G.N."/>
            <person name="Weber W.W."/>
        </authorList>
    </citation>
    <scope>CHARACTERIZATION</scope>
</reference>
<organism>
    <name type="scientific">Mus musculus</name>
    <name type="common">Mouse</name>
    <dbReference type="NCBI Taxonomy" id="10090"/>
    <lineage>
        <taxon>Eukaryota</taxon>
        <taxon>Metazoa</taxon>
        <taxon>Chordata</taxon>
        <taxon>Craniata</taxon>
        <taxon>Vertebrata</taxon>
        <taxon>Euteleostomi</taxon>
        <taxon>Mammalia</taxon>
        <taxon>Eutheria</taxon>
        <taxon>Euarchontoglires</taxon>
        <taxon>Glires</taxon>
        <taxon>Rodentia</taxon>
        <taxon>Myomorpha</taxon>
        <taxon>Muroidea</taxon>
        <taxon>Muridae</taxon>
        <taxon>Murinae</taxon>
        <taxon>Mus</taxon>
        <taxon>Mus</taxon>
    </lineage>
</organism>
<sequence>MDIEAYFERIGYKNSVNKLDLATLTEVLQHQMRAVPFENLNMHCGEAMHLDLQDIFDHIVRKKRGGWCLQVNHLLYWALTKMGFETTMLGGYVYITPVSKYSSEMVHLLVQVTISDRKYIVDSAYGGSYQMWEPLELTSGKDQPQVPAIFLLTEENGTWYLDQIRREQYVPNEEFVNSDLLEKNKYRKIYSFTLEPRVIEDFEYVNSYLQTSPASVFVSTSFCSLQTSEGVHCLVGSTFTSRRFSYKDDVDLVEFKYVNEEEIEDVLKTAFGISLERKFVPKHGELVFTI</sequence>
<keyword id="KW-0007">Acetylation</keyword>
<keyword id="KW-0012">Acyltransferase</keyword>
<keyword id="KW-0963">Cytoplasm</keyword>
<keyword id="KW-1185">Reference proteome</keyword>
<keyword id="KW-0808">Transferase</keyword>
<dbReference type="EC" id="2.3.1.5" evidence="3"/>
<dbReference type="EMBL" id="U35885">
    <property type="protein sequence ID" value="AAA78942.1"/>
    <property type="molecule type" value="mRNA"/>
</dbReference>
<dbReference type="EMBL" id="U37119">
    <property type="protein sequence ID" value="AAA80667.1"/>
    <property type="molecule type" value="Genomic_DNA"/>
</dbReference>
<dbReference type="CCDS" id="CCDS22337.1"/>
<dbReference type="PIR" id="A61267">
    <property type="entry name" value="A61267"/>
</dbReference>
<dbReference type="RefSeq" id="NP_032699.1">
    <property type="nucleotide sequence ID" value="NM_008673.3"/>
</dbReference>
<dbReference type="SMR" id="P50294"/>
<dbReference type="FunCoup" id="P50294">
    <property type="interactions" value="197"/>
</dbReference>
<dbReference type="STRING" id="10090.ENSMUSP00000026677"/>
<dbReference type="ChEMBL" id="CHEMBL5723"/>
<dbReference type="GlyGen" id="P50294">
    <property type="glycosylation" value="1 site"/>
</dbReference>
<dbReference type="iPTMnet" id="P50294"/>
<dbReference type="PhosphoSitePlus" id="P50294"/>
<dbReference type="jPOST" id="P50294"/>
<dbReference type="PaxDb" id="10090-ENSMUSP00000026677"/>
<dbReference type="PeptideAtlas" id="P50294"/>
<dbReference type="ProteomicsDB" id="281806"/>
<dbReference type="DNASU" id="17960"/>
<dbReference type="Ensembl" id="ENSMUST00000026677.4">
    <property type="protein sequence ID" value="ENSMUSP00000026677.4"/>
    <property type="gene ID" value="ENSMUSG00000025588.5"/>
</dbReference>
<dbReference type="GeneID" id="17960"/>
<dbReference type="KEGG" id="mmu:17960"/>
<dbReference type="UCSC" id="uc009lvv.1">
    <property type="organism name" value="mouse"/>
</dbReference>
<dbReference type="AGR" id="MGI:97279"/>
<dbReference type="CTD" id="9"/>
<dbReference type="MGI" id="MGI:97279">
    <property type="gene designation" value="Nat1"/>
</dbReference>
<dbReference type="VEuPathDB" id="HostDB:ENSMUSG00000025588"/>
<dbReference type="eggNOG" id="ENOG502RD0D">
    <property type="taxonomic scope" value="Eukaryota"/>
</dbReference>
<dbReference type="GeneTree" id="ENSGT00390000012054"/>
<dbReference type="HOGENOM" id="CLU_049918_3_0_1"/>
<dbReference type="InParanoid" id="P50294"/>
<dbReference type="OrthoDB" id="10260017at2759"/>
<dbReference type="PhylomeDB" id="P50294"/>
<dbReference type="TreeFam" id="TF106311"/>
<dbReference type="BRENDA" id="2.3.1.5">
    <property type="organism ID" value="3474"/>
</dbReference>
<dbReference type="Reactome" id="R-MMU-156582">
    <property type="pathway name" value="Acetylation"/>
</dbReference>
<dbReference type="Reactome" id="R-MMU-9753281">
    <property type="pathway name" value="Paracetamol ADME"/>
</dbReference>
<dbReference type="BioGRID-ORCS" id="17960">
    <property type="hits" value="2 hits in 76 CRISPR screens"/>
</dbReference>
<dbReference type="PRO" id="PR:P50294"/>
<dbReference type="Proteomes" id="UP000000589">
    <property type="component" value="Chromosome 8"/>
</dbReference>
<dbReference type="RNAct" id="P50294">
    <property type="molecule type" value="protein"/>
</dbReference>
<dbReference type="Bgee" id="ENSMUSG00000025588">
    <property type="expression patterns" value="Expressed in mesodermal cell in embryo and 37 other cell types or tissues"/>
</dbReference>
<dbReference type="ExpressionAtlas" id="P50294">
    <property type="expression patterns" value="baseline and differential"/>
</dbReference>
<dbReference type="GO" id="GO:0005737">
    <property type="term" value="C:cytoplasm"/>
    <property type="evidence" value="ECO:0007669"/>
    <property type="project" value="UniProtKB-SubCell"/>
</dbReference>
<dbReference type="GO" id="GO:0004060">
    <property type="term" value="F:arylamine N-acetyltransferase activity"/>
    <property type="evidence" value="ECO:0000314"/>
    <property type="project" value="MGI"/>
</dbReference>
<dbReference type="FunFam" id="3.30.2140.20:FF:000001">
    <property type="entry name" value="Arylamine N-acetyltransferase 1"/>
    <property type="match status" value="1"/>
</dbReference>
<dbReference type="Gene3D" id="3.30.2140.20">
    <property type="match status" value="1"/>
</dbReference>
<dbReference type="InterPro" id="IPR001447">
    <property type="entry name" value="Arylamine_N-AcTrfase"/>
</dbReference>
<dbReference type="InterPro" id="IPR053710">
    <property type="entry name" value="Arylamine_NAT_domain_sf"/>
</dbReference>
<dbReference type="InterPro" id="IPR038765">
    <property type="entry name" value="Papain-like_cys_pep_sf"/>
</dbReference>
<dbReference type="PANTHER" id="PTHR11786:SF2">
    <property type="entry name" value="ARYLAMINE N-ACETYLTRANSFERASE 1"/>
    <property type="match status" value="1"/>
</dbReference>
<dbReference type="PANTHER" id="PTHR11786">
    <property type="entry name" value="N-HYDROXYARYLAMINE O-ACETYLTRANSFERASE"/>
    <property type="match status" value="1"/>
</dbReference>
<dbReference type="Pfam" id="PF00797">
    <property type="entry name" value="Acetyltransf_2"/>
    <property type="match status" value="1"/>
</dbReference>
<dbReference type="PRINTS" id="PR01543">
    <property type="entry name" value="ANATRNSFRASE"/>
</dbReference>
<dbReference type="SUPFAM" id="SSF54001">
    <property type="entry name" value="Cysteine proteinases"/>
    <property type="match status" value="1"/>
</dbReference>